<comment type="function">
    <text evidence="1">With S4 and S12 plays an important role in translational accuracy.</text>
</comment>
<comment type="function">
    <text evidence="1">Located at the back of the 30S subunit body where it stabilizes the conformation of the head with respect to the body.</text>
</comment>
<comment type="subunit">
    <text evidence="1">Part of the 30S ribosomal subunit. Contacts proteins S4 and S8.</text>
</comment>
<comment type="domain">
    <text>The N-terminal domain interacts with the head of the 30S subunit; the C-terminal domain interacts with the body and contacts protein S4. The interaction surface between S4 and S5 is involved in control of translational fidelity.</text>
</comment>
<comment type="similarity">
    <text evidence="1">Belongs to the universal ribosomal protein uS5 family.</text>
</comment>
<reference key="1">
    <citation type="journal article" date="2007" name="PLoS ONE">
        <title>Paradoxical DNA repair and peroxide resistance gene conservation in Bacillus pumilus SAFR-032.</title>
        <authorList>
            <person name="Gioia J."/>
            <person name="Yerrapragada S."/>
            <person name="Qin X."/>
            <person name="Jiang H."/>
            <person name="Igboeli O.C."/>
            <person name="Muzny D."/>
            <person name="Dugan-Rocha S."/>
            <person name="Ding Y."/>
            <person name="Hawes A."/>
            <person name="Liu W."/>
            <person name="Perez L."/>
            <person name="Kovar C."/>
            <person name="Dinh H."/>
            <person name="Lee S."/>
            <person name="Nazareth L."/>
            <person name="Blyth P."/>
            <person name="Holder M."/>
            <person name="Buhay C."/>
            <person name="Tirumalai M.R."/>
            <person name="Liu Y."/>
            <person name="Dasgupta I."/>
            <person name="Bokhetache L."/>
            <person name="Fujita M."/>
            <person name="Karouia F."/>
            <person name="Eswara Moorthy P."/>
            <person name="Siefert J."/>
            <person name="Uzman A."/>
            <person name="Buzumbo P."/>
            <person name="Verma A."/>
            <person name="Zwiya H."/>
            <person name="McWilliams B.D."/>
            <person name="Olowu A."/>
            <person name="Clinkenbeard K.D."/>
            <person name="Newcombe D."/>
            <person name="Golebiewski L."/>
            <person name="Petrosino J.F."/>
            <person name="Nicholson W.L."/>
            <person name="Fox G.E."/>
            <person name="Venkateswaran K."/>
            <person name="Highlander S.K."/>
            <person name="Weinstock G.M."/>
        </authorList>
    </citation>
    <scope>NUCLEOTIDE SEQUENCE [LARGE SCALE GENOMIC DNA]</scope>
    <source>
        <strain>SAFR-032</strain>
    </source>
</reference>
<protein>
    <recommendedName>
        <fullName evidence="1">Small ribosomal subunit protein uS5</fullName>
    </recommendedName>
    <alternativeName>
        <fullName evidence="2">30S ribosomal protein S5</fullName>
    </alternativeName>
</protein>
<keyword id="KW-0687">Ribonucleoprotein</keyword>
<keyword id="KW-0689">Ribosomal protein</keyword>
<keyword id="KW-0694">RNA-binding</keyword>
<keyword id="KW-0699">rRNA-binding</keyword>
<accession>A8F9A2</accession>
<feature type="chain" id="PRO_0000323072" description="Small ribosomal subunit protein uS5">
    <location>
        <begin position="1"/>
        <end position="166"/>
    </location>
</feature>
<feature type="domain" description="S5 DRBM" evidence="1">
    <location>
        <begin position="11"/>
        <end position="74"/>
    </location>
</feature>
<name>RS5_BACP2</name>
<sequence length="166" mass="17570">MSRIDQSKLELEERLVTVNRVAKVVKGGRRFRFAALVVVGDKNGHVGFGTGKAQEVPEAIRKAVEDAKKNLIEVPMVGTTIPHEIIGRFGAGNVLLKPASEGTGVIAGGPVRAVLELAGLADILSKSLGSNTPINMIRATLQGLSELKRAEDVAKLRGKSVEDLLG</sequence>
<dbReference type="EMBL" id="CP000813">
    <property type="protein sequence ID" value="ABV60819.1"/>
    <property type="molecule type" value="Genomic_DNA"/>
</dbReference>
<dbReference type="RefSeq" id="WP_003217179.1">
    <property type="nucleotide sequence ID" value="NZ_VEIS01000020.1"/>
</dbReference>
<dbReference type="SMR" id="A8F9A2"/>
<dbReference type="STRING" id="315750.BPUM_0119"/>
<dbReference type="GeneID" id="5619361"/>
<dbReference type="KEGG" id="bpu:BPUM_0119"/>
<dbReference type="eggNOG" id="COG0098">
    <property type="taxonomic scope" value="Bacteria"/>
</dbReference>
<dbReference type="HOGENOM" id="CLU_065898_2_2_9"/>
<dbReference type="OrthoDB" id="9809045at2"/>
<dbReference type="Proteomes" id="UP000001355">
    <property type="component" value="Chromosome"/>
</dbReference>
<dbReference type="GO" id="GO:0015935">
    <property type="term" value="C:small ribosomal subunit"/>
    <property type="evidence" value="ECO:0007669"/>
    <property type="project" value="InterPro"/>
</dbReference>
<dbReference type="GO" id="GO:0019843">
    <property type="term" value="F:rRNA binding"/>
    <property type="evidence" value="ECO:0007669"/>
    <property type="project" value="UniProtKB-UniRule"/>
</dbReference>
<dbReference type="GO" id="GO:0003735">
    <property type="term" value="F:structural constituent of ribosome"/>
    <property type="evidence" value="ECO:0007669"/>
    <property type="project" value="InterPro"/>
</dbReference>
<dbReference type="GO" id="GO:0006412">
    <property type="term" value="P:translation"/>
    <property type="evidence" value="ECO:0007669"/>
    <property type="project" value="UniProtKB-UniRule"/>
</dbReference>
<dbReference type="FunFam" id="3.30.160.20:FF:000001">
    <property type="entry name" value="30S ribosomal protein S5"/>
    <property type="match status" value="1"/>
</dbReference>
<dbReference type="FunFam" id="3.30.230.10:FF:000002">
    <property type="entry name" value="30S ribosomal protein S5"/>
    <property type="match status" value="1"/>
</dbReference>
<dbReference type="Gene3D" id="3.30.160.20">
    <property type="match status" value="1"/>
</dbReference>
<dbReference type="Gene3D" id="3.30.230.10">
    <property type="match status" value="1"/>
</dbReference>
<dbReference type="HAMAP" id="MF_01307_B">
    <property type="entry name" value="Ribosomal_uS5_B"/>
    <property type="match status" value="1"/>
</dbReference>
<dbReference type="InterPro" id="IPR020568">
    <property type="entry name" value="Ribosomal_Su5_D2-typ_SF"/>
</dbReference>
<dbReference type="InterPro" id="IPR000851">
    <property type="entry name" value="Ribosomal_uS5"/>
</dbReference>
<dbReference type="InterPro" id="IPR005712">
    <property type="entry name" value="Ribosomal_uS5_bac-type"/>
</dbReference>
<dbReference type="InterPro" id="IPR005324">
    <property type="entry name" value="Ribosomal_uS5_C"/>
</dbReference>
<dbReference type="InterPro" id="IPR013810">
    <property type="entry name" value="Ribosomal_uS5_N"/>
</dbReference>
<dbReference type="InterPro" id="IPR018192">
    <property type="entry name" value="Ribosomal_uS5_N_CS"/>
</dbReference>
<dbReference type="InterPro" id="IPR014721">
    <property type="entry name" value="Ribsml_uS5_D2-typ_fold_subgr"/>
</dbReference>
<dbReference type="NCBIfam" id="TIGR01021">
    <property type="entry name" value="rpsE_bact"/>
    <property type="match status" value="1"/>
</dbReference>
<dbReference type="PANTHER" id="PTHR48277">
    <property type="entry name" value="MITOCHONDRIAL RIBOSOMAL PROTEIN S5"/>
    <property type="match status" value="1"/>
</dbReference>
<dbReference type="PANTHER" id="PTHR48277:SF1">
    <property type="entry name" value="MITOCHONDRIAL RIBOSOMAL PROTEIN S5"/>
    <property type="match status" value="1"/>
</dbReference>
<dbReference type="Pfam" id="PF00333">
    <property type="entry name" value="Ribosomal_S5"/>
    <property type="match status" value="1"/>
</dbReference>
<dbReference type="Pfam" id="PF03719">
    <property type="entry name" value="Ribosomal_S5_C"/>
    <property type="match status" value="1"/>
</dbReference>
<dbReference type="SUPFAM" id="SSF54768">
    <property type="entry name" value="dsRNA-binding domain-like"/>
    <property type="match status" value="1"/>
</dbReference>
<dbReference type="SUPFAM" id="SSF54211">
    <property type="entry name" value="Ribosomal protein S5 domain 2-like"/>
    <property type="match status" value="1"/>
</dbReference>
<dbReference type="PROSITE" id="PS00585">
    <property type="entry name" value="RIBOSOMAL_S5"/>
    <property type="match status" value="1"/>
</dbReference>
<dbReference type="PROSITE" id="PS50881">
    <property type="entry name" value="S5_DSRBD"/>
    <property type="match status" value="1"/>
</dbReference>
<gene>
    <name evidence="1" type="primary">rpsE</name>
    <name type="ordered locus">BPUM_0119</name>
</gene>
<organism>
    <name type="scientific">Bacillus pumilus (strain SAFR-032)</name>
    <dbReference type="NCBI Taxonomy" id="315750"/>
    <lineage>
        <taxon>Bacteria</taxon>
        <taxon>Bacillati</taxon>
        <taxon>Bacillota</taxon>
        <taxon>Bacilli</taxon>
        <taxon>Bacillales</taxon>
        <taxon>Bacillaceae</taxon>
        <taxon>Bacillus</taxon>
    </lineage>
</organism>
<evidence type="ECO:0000255" key="1">
    <source>
        <dbReference type="HAMAP-Rule" id="MF_01307"/>
    </source>
</evidence>
<evidence type="ECO:0000305" key="2"/>
<proteinExistence type="inferred from homology"/>